<feature type="initiator methionine" description="Removed" evidence="1">
    <location>
        <position position="1"/>
    </location>
</feature>
<feature type="chain" id="PRO_0000297753" description="Histone H3.1/H3.2">
    <location>
        <begin position="2"/>
        <end position="136"/>
    </location>
</feature>
<feature type="region of interest" description="Disordered" evidence="2">
    <location>
        <begin position="1"/>
        <end position="43"/>
    </location>
</feature>
<feature type="modified residue" description="N6,N6,N6-trimethyllysine; alternate" evidence="1">
    <location>
        <position position="5"/>
    </location>
</feature>
<feature type="modified residue" description="N6,N6-dimethyllysine; alternate" evidence="1">
    <location>
        <position position="5"/>
    </location>
</feature>
<feature type="modified residue" description="N6-methyllysine; alternate" evidence="1">
    <location>
        <position position="5"/>
    </location>
</feature>
<feature type="modified residue" description="N6-acetyllysine; alternate" evidence="1">
    <location>
        <position position="10"/>
    </location>
</feature>
<feature type="modified residue" description="N6-methyllysine; alternate" evidence="1">
    <location>
        <position position="10"/>
    </location>
</feature>
<feature type="modified residue" description="Phosphoserine" evidence="1">
    <location>
        <position position="11"/>
    </location>
</feature>
<feature type="modified residue" description="N6,N6-dimethyllysine; alternate" evidence="1">
    <location>
        <position position="15"/>
    </location>
</feature>
<feature type="modified residue" description="N6-acetyllysine; alternate" evidence="1">
    <location>
        <position position="15"/>
    </location>
</feature>
<feature type="modified residue" description="N6-acetyllysine; alternate" evidence="1">
    <location>
        <position position="19"/>
    </location>
</feature>
<feature type="modified residue" description="N6-methyllysine; alternate" evidence="1">
    <location>
        <position position="19"/>
    </location>
</feature>
<feature type="modified residue" description="N6-acetyllysine; alternate" evidence="1">
    <location>
        <position position="24"/>
    </location>
</feature>
<feature type="modified residue" description="N6-methyllysine; alternate" evidence="1">
    <location>
        <position position="24"/>
    </location>
</feature>
<feature type="modified residue" description="N6,N6,N6-trimethyllysine; alternate" evidence="1">
    <location>
        <position position="28"/>
    </location>
</feature>
<feature type="modified residue" description="N6,N6-dimethyllysine; alternate" evidence="1">
    <location>
        <position position="28"/>
    </location>
</feature>
<feature type="modified residue" description="N6-acetyllysine; alternate" evidence="1">
    <location>
        <position position="28"/>
    </location>
</feature>
<feature type="modified residue" description="N6-methyllysine; alternate" evidence="1">
    <location>
        <position position="28"/>
    </location>
</feature>
<feature type="modified residue" description="N6,N6,N6-trimethyllysine; alternate" evidence="1">
    <location>
        <position position="37"/>
    </location>
</feature>
<feature type="modified residue" description="N6,N6-dimethyllysine; alternate" evidence="1">
    <location>
        <position position="37"/>
    </location>
</feature>
<feature type="modified residue" description="N6-acetyllysine; alternate" evidence="1">
    <location>
        <position position="37"/>
    </location>
</feature>
<feature type="modified residue" description="N6-methyllysine; alternate" evidence="1">
    <location>
        <position position="37"/>
    </location>
</feature>
<feature type="modified residue" description="N6-acetyllysine" evidence="1">
    <location>
        <position position="57"/>
    </location>
</feature>
<feature type="modified residue" description="N6-acetyllysine" evidence="1">
    <location>
        <position position="65"/>
    </location>
</feature>
<feature type="modified residue" description="N6,N6,N6-trimethyllysine; alternate" evidence="1">
    <location>
        <position position="80"/>
    </location>
</feature>
<feature type="modified residue" description="N6,N6-dimethyllysine; alternate" evidence="1">
    <location>
        <position position="80"/>
    </location>
</feature>
<feature type="modified residue" description="N6-methyllysine; alternate" evidence="1">
    <location>
        <position position="80"/>
    </location>
</feature>
<proteinExistence type="inferred from homology"/>
<comment type="function">
    <text>Core component of nucleosome. Nucleosomes wrap and compact DNA into chromatin, limiting DNA accessibility to the cellular machineries which require DNA as a template. Histones thereby play a central role in transcription regulation, DNA repair, DNA replication and chromosomal stability. DNA accessibility is regulated via a complex set of post-translational modifications of histones, also called histone code, and nucleosome remodeling.</text>
</comment>
<comment type="subunit">
    <text>The nucleosome is a histone octamer containing two molecules each of H2A, H2B, H3 and H4 assembled in one H3-H4 heterotetramer and two H2A-H2B heterodimers. The octamer wraps approximately 147 bp of DNA.</text>
</comment>
<comment type="subcellular location">
    <subcellularLocation>
        <location evidence="1">Nucleus</location>
    </subcellularLocation>
    <subcellularLocation>
        <location evidence="1">Chromosome</location>
    </subcellularLocation>
</comment>
<comment type="PTM">
    <text evidence="1">Phosphorylated to form H3S10ph. H3S10ph promotes subsequent H3K14ac formation and is required for transcriptional activation through TBP recruitment to the promoters (By similarity).</text>
</comment>
<comment type="PTM">
    <text evidence="1">Mono-, di- and trimethylated by the COMPASS complex to form H3K4me1/2/3. H3K4me activates gene expression by regulating transcription elongation and plays a role in telomere length maintenance. H3K4me enrichment correlates with transcription levels, and occurs in a 5' to 3' gradient with H3K4me3 enrichment at the 5'-end of genes, shifting to H3K4me2 and then H3K4me1. Methylated by SET2 to form H3K36me. H3K36me represses gene expression. Methylated by DOT1 to form H3K79me. H3K79me is required for association of SIR proteins with telomeric regions and for telomeric silencing. The COMPASS-mediated formation of H3K4me2/3 and the DOT1-mediated formation of H3K79me require H2BK123ub1 (By similarity).</text>
</comment>
<comment type="PTM">
    <text evidence="1">Acetylation of histone H3 leads to transcriptional activation. H3K14ac formation by GCN5 is promoted by H3S10ph. H3K14ac can also be formed by ESA1. H3K56ac formation occurs predominantly in newly synthesized H3 molecules during G1, S and G2/M of the cell cycle and may be involved in DNA repair (By similarity).</text>
</comment>
<comment type="similarity">
    <text evidence="3">Belongs to the histone H3 family.</text>
</comment>
<comment type="caution">
    <text evidence="3">To ensure consistency between histone entries, we follow the 'Brno' nomenclature for histone modifications, with positions referring to those used in the literature for the 'closest' model organism. Due to slight variations in histone sequences between organisms and to the presence of initiator methionine in UniProtKB/Swiss-Prot sequences, the actual positions of modified amino acids in the sequence generally differ. In this entry the following conventions are used: H3K4me1/2/3 = mono-, di- and trimethylated Lys-5; H3K9ac = acetylated Lys-10; H3K9me1 = monomethylated Lys-10; H3S10ph = phosphorylated Ser-11; H3K14ac = acetylated Lys-15; H3K14me2 = dimethylated Lys-15; H3K18ac = acetylated Lys-19; H3K18me1 = monomethylated Lys-19; H3K23ac = acetylated Lys-24; H3K23me1 = monomethylated Lys-24; H3K27ac = acetylated Lys-28; H3K27me1/2/3 = mono-, di- and trimethylated Lys-28; H3K36ac = acetylated Lys-37; H3K36me1/2/3 = mono-, di- and trimethylated Lys-37; H3K56ac = acetylated Lys-57; H3K64ac = acetylated Lys-65; H3K79me1/2/3 = mono-, di- and trimethylated Lys-80.</text>
</comment>
<gene>
    <name type="primary">HHT1</name>
    <name type="ORF">PICST_73330</name>
</gene>
<gene>
    <name type="primary">HHT2</name>
    <name type="ORF">PICST_90527</name>
</gene>
<organism>
    <name type="scientific">Scheffersomyces stipitis (strain ATCC 58785 / CBS 6054 / NBRC 10063 / NRRL Y-11545)</name>
    <name type="common">Yeast</name>
    <name type="synonym">Pichia stipitis</name>
    <dbReference type="NCBI Taxonomy" id="322104"/>
    <lineage>
        <taxon>Eukaryota</taxon>
        <taxon>Fungi</taxon>
        <taxon>Dikarya</taxon>
        <taxon>Ascomycota</taxon>
        <taxon>Saccharomycotina</taxon>
        <taxon>Pichiomycetes</taxon>
        <taxon>Debaryomycetaceae</taxon>
        <taxon>Scheffersomyces</taxon>
    </lineage>
</organism>
<dbReference type="EMBL" id="CP000500">
    <property type="protein sequence ID" value="ABN67439.1"/>
    <property type="molecule type" value="Genomic_DNA"/>
</dbReference>
<dbReference type="EMBL" id="CP000500">
    <property type="protein sequence ID" value="ABN67869.1"/>
    <property type="molecule type" value="Genomic_DNA"/>
</dbReference>
<dbReference type="RefSeq" id="XP_001385468.1">
    <property type="nucleotide sequence ID" value="XM_001385431.1"/>
</dbReference>
<dbReference type="RefSeq" id="XP_001385898.1">
    <property type="nucleotide sequence ID" value="XM_001385861.1"/>
</dbReference>
<dbReference type="SMR" id="A3LXD5"/>
<dbReference type="FunCoup" id="A3LXD5">
    <property type="interactions" value="962"/>
</dbReference>
<dbReference type="STRING" id="322104.A3LXD5"/>
<dbReference type="GeneID" id="4839840"/>
<dbReference type="GeneID" id="4840019"/>
<dbReference type="KEGG" id="pic:PICST_73330"/>
<dbReference type="KEGG" id="pic:PICST_90527"/>
<dbReference type="eggNOG" id="KOG1745">
    <property type="taxonomic scope" value="Eukaryota"/>
</dbReference>
<dbReference type="HOGENOM" id="CLU_078295_4_0_1"/>
<dbReference type="InParanoid" id="A3LXD5"/>
<dbReference type="OMA" id="HIFAEMA"/>
<dbReference type="OrthoDB" id="5326060at2759"/>
<dbReference type="Proteomes" id="UP000002258">
    <property type="component" value="Chromosome 6"/>
</dbReference>
<dbReference type="GO" id="GO:0000786">
    <property type="term" value="C:nucleosome"/>
    <property type="evidence" value="ECO:0007669"/>
    <property type="project" value="UniProtKB-KW"/>
</dbReference>
<dbReference type="GO" id="GO:0005634">
    <property type="term" value="C:nucleus"/>
    <property type="evidence" value="ECO:0007669"/>
    <property type="project" value="UniProtKB-SubCell"/>
</dbReference>
<dbReference type="GO" id="GO:0003677">
    <property type="term" value="F:DNA binding"/>
    <property type="evidence" value="ECO:0007669"/>
    <property type="project" value="UniProtKB-KW"/>
</dbReference>
<dbReference type="GO" id="GO:0046982">
    <property type="term" value="F:protein heterodimerization activity"/>
    <property type="evidence" value="ECO:0007669"/>
    <property type="project" value="InterPro"/>
</dbReference>
<dbReference type="GO" id="GO:0030527">
    <property type="term" value="F:structural constituent of chromatin"/>
    <property type="evidence" value="ECO:0007669"/>
    <property type="project" value="InterPro"/>
</dbReference>
<dbReference type="CDD" id="cd22911">
    <property type="entry name" value="HFD_H3"/>
    <property type="match status" value="1"/>
</dbReference>
<dbReference type="FunFam" id="1.10.20.10:FF:000010">
    <property type="entry name" value="Histone H3"/>
    <property type="match status" value="1"/>
</dbReference>
<dbReference type="Gene3D" id="1.10.20.10">
    <property type="entry name" value="Histone, subunit A"/>
    <property type="match status" value="1"/>
</dbReference>
<dbReference type="InterPro" id="IPR009072">
    <property type="entry name" value="Histone-fold"/>
</dbReference>
<dbReference type="InterPro" id="IPR007125">
    <property type="entry name" value="Histone_H2A/H2B/H3"/>
</dbReference>
<dbReference type="InterPro" id="IPR000164">
    <property type="entry name" value="Histone_H3/CENP-A"/>
</dbReference>
<dbReference type="PANTHER" id="PTHR11426">
    <property type="entry name" value="HISTONE H3"/>
    <property type="match status" value="1"/>
</dbReference>
<dbReference type="Pfam" id="PF00125">
    <property type="entry name" value="Histone"/>
    <property type="match status" value="1"/>
</dbReference>
<dbReference type="PRINTS" id="PR00622">
    <property type="entry name" value="HISTONEH3"/>
</dbReference>
<dbReference type="SMART" id="SM00428">
    <property type="entry name" value="H3"/>
    <property type="match status" value="1"/>
</dbReference>
<dbReference type="SUPFAM" id="SSF47113">
    <property type="entry name" value="Histone-fold"/>
    <property type="match status" value="1"/>
</dbReference>
<dbReference type="PROSITE" id="PS00322">
    <property type="entry name" value="HISTONE_H3_1"/>
    <property type="match status" value="1"/>
</dbReference>
<dbReference type="PROSITE" id="PS00959">
    <property type="entry name" value="HISTONE_H3_2"/>
    <property type="match status" value="1"/>
</dbReference>
<keyword id="KW-0007">Acetylation</keyword>
<keyword id="KW-0158">Chromosome</keyword>
<keyword id="KW-0238">DNA-binding</keyword>
<keyword id="KW-0488">Methylation</keyword>
<keyword id="KW-0544">Nucleosome core</keyword>
<keyword id="KW-0539">Nucleus</keyword>
<keyword id="KW-0597">Phosphoprotein</keyword>
<keyword id="KW-1185">Reference proteome</keyword>
<reference key="1">
    <citation type="journal article" date="2007" name="Nat. Biotechnol.">
        <title>Genome sequence of the lignocellulose-bioconverting and xylose-fermenting yeast Pichia stipitis.</title>
        <authorList>
            <person name="Jeffries T.W."/>
            <person name="Grigoriev I.V."/>
            <person name="Grimwood J."/>
            <person name="Laplaza J.M."/>
            <person name="Aerts A."/>
            <person name="Salamov A."/>
            <person name="Schmutz J."/>
            <person name="Lindquist E."/>
            <person name="Dehal P."/>
            <person name="Shapiro H."/>
            <person name="Jin Y.-S."/>
            <person name="Passoth V."/>
            <person name="Richardson P.M."/>
        </authorList>
    </citation>
    <scope>NUCLEOTIDE SEQUENCE [LARGE SCALE GENOMIC DNA]</scope>
    <source>
        <strain>ATCC 58785 / CBS 6054 / NBRC 10063 / NRRL Y-11545</strain>
    </source>
</reference>
<sequence>MARTKQTARKSTGGKAPRKQLASKAARKSAPSTGGVKKPHRYKPGTVALREIRRFQKSTELLIRKLPFQRLVREIAQDFKTDLRFQSSAIGALQESVEAYLVSLFEDTNLCAIHAKRVTIQKKDIQLARRLRGERS</sequence>
<accession>A3LXD5</accession>
<protein>
    <recommendedName>
        <fullName>Histone H3.1/H3.2</fullName>
    </recommendedName>
</protein>
<evidence type="ECO:0000250" key="1"/>
<evidence type="ECO:0000256" key="2">
    <source>
        <dbReference type="SAM" id="MobiDB-lite"/>
    </source>
</evidence>
<evidence type="ECO:0000305" key="3"/>
<name>H31_PICST</name>